<keyword id="KW-0002">3D-structure</keyword>
<keyword id="KW-1003">Cell membrane</keyword>
<keyword id="KW-0325">Glycoprotein</keyword>
<keyword id="KW-0472">Membrane</keyword>
<keyword id="KW-0675">Receptor</keyword>
<keyword id="KW-1185">Reference proteome</keyword>
<keyword id="KW-0964">Secreted</keyword>
<keyword id="KW-0732">Signal</keyword>
<keyword id="KW-0812">Transmembrane</keyword>
<keyword id="KW-1133">Transmembrane helix</keyword>
<dbReference type="EMBL" id="M84746">
    <property type="protein sequence ID" value="AAA37871.1"/>
    <property type="molecule type" value="mRNA"/>
</dbReference>
<dbReference type="CCDS" id="CCDS24517.1"/>
<dbReference type="PIR" id="A45268">
    <property type="entry name" value="A45268"/>
</dbReference>
<dbReference type="RefSeq" id="NP_032400.1">
    <property type="nucleotide sequence ID" value="NM_008374.2"/>
</dbReference>
<dbReference type="PDB" id="8DDD">
    <property type="method" value="NMR"/>
    <property type="chains" value="B=268-298"/>
</dbReference>
<dbReference type="PDBsum" id="8DDD"/>
<dbReference type="SMR" id="Q01114"/>
<dbReference type="CORUM" id="Q01114"/>
<dbReference type="FunCoup" id="Q01114">
    <property type="interactions" value="578"/>
</dbReference>
<dbReference type="STRING" id="10090.ENSMUSP00000119557"/>
<dbReference type="GlyCosmos" id="Q01114">
    <property type="glycosylation" value="2 sites, No reported glycans"/>
</dbReference>
<dbReference type="GlyGen" id="Q01114">
    <property type="glycosylation" value="2 sites"/>
</dbReference>
<dbReference type="PhosphoSitePlus" id="Q01114"/>
<dbReference type="PaxDb" id="10090-ENSMUSP00000119557"/>
<dbReference type="Antibodypedia" id="4187">
    <property type="antibodies" value="456 antibodies from 32 providers"/>
</dbReference>
<dbReference type="DNASU" id="16199"/>
<dbReference type="Ensembl" id="ENSMUST00000145401.8">
    <property type="protein sequence ID" value="ENSMUSP00000118204.2"/>
    <property type="gene ID" value="ENSMUSG00000020279.11"/>
</dbReference>
<dbReference type="GeneID" id="16199"/>
<dbReference type="KEGG" id="mmu:16199"/>
<dbReference type="UCSC" id="uc007iix.2">
    <property type="organism name" value="mouse"/>
</dbReference>
<dbReference type="AGR" id="MGI:96564"/>
<dbReference type="CTD" id="3581"/>
<dbReference type="MGI" id="MGI:96564">
    <property type="gene designation" value="Il9r"/>
</dbReference>
<dbReference type="VEuPathDB" id="HostDB:ENSMUSG00000020279"/>
<dbReference type="eggNOG" id="ENOG502SB39">
    <property type="taxonomic scope" value="Eukaryota"/>
</dbReference>
<dbReference type="GeneTree" id="ENSGT00510000049125"/>
<dbReference type="HOGENOM" id="CLU_614777_0_0_1"/>
<dbReference type="InParanoid" id="Q01114"/>
<dbReference type="OMA" id="VKRTFYQ"/>
<dbReference type="Reactome" id="R-MMU-8985947">
    <property type="pathway name" value="Interleukin-9 signaling"/>
</dbReference>
<dbReference type="BioGRID-ORCS" id="16199">
    <property type="hits" value="2 hits in 79 CRISPR screens"/>
</dbReference>
<dbReference type="PRO" id="PR:Q01114"/>
<dbReference type="Proteomes" id="UP000000589">
    <property type="component" value="Chromosome 11"/>
</dbReference>
<dbReference type="RNAct" id="Q01114">
    <property type="molecule type" value="protein"/>
</dbReference>
<dbReference type="Bgee" id="ENSMUSG00000020279">
    <property type="expression patterns" value="Expressed in spermatocyte and 18 other cell types or tissues"/>
</dbReference>
<dbReference type="ExpressionAtlas" id="Q01114">
    <property type="expression patterns" value="baseline and differential"/>
</dbReference>
<dbReference type="GO" id="GO:0009986">
    <property type="term" value="C:cell surface"/>
    <property type="evidence" value="ECO:0000314"/>
    <property type="project" value="MGI"/>
</dbReference>
<dbReference type="GO" id="GO:0005576">
    <property type="term" value="C:extracellular region"/>
    <property type="evidence" value="ECO:0007669"/>
    <property type="project" value="UniProtKB-SubCell"/>
</dbReference>
<dbReference type="GO" id="GO:0005886">
    <property type="term" value="C:plasma membrane"/>
    <property type="evidence" value="ECO:0000314"/>
    <property type="project" value="MGI"/>
</dbReference>
<dbReference type="GO" id="GO:0004919">
    <property type="term" value="F:interleukin-9 receptor activity"/>
    <property type="evidence" value="ECO:0000316"/>
    <property type="project" value="MGI"/>
</dbReference>
<dbReference type="GO" id="GO:0030183">
    <property type="term" value="P:B cell differentiation"/>
    <property type="evidence" value="ECO:0000316"/>
    <property type="project" value="MGI"/>
</dbReference>
<dbReference type="GO" id="GO:0042100">
    <property type="term" value="P:B cell proliferation"/>
    <property type="evidence" value="ECO:0000316"/>
    <property type="project" value="MGI"/>
</dbReference>
<dbReference type="GO" id="GO:0016064">
    <property type="term" value="P:immunoglobulin mediated immune response"/>
    <property type="evidence" value="ECO:0000316"/>
    <property type="project" value="MGI"/>
</dbReference>
<dbReference type="CDD" id="cd00063">
    <property type="entry name" value="FN3"/>
    <property type="match status" value="1"/>
</dbReference>
<dbReference type="Gene3D" id="2.60.40.10">
    <property type="entry name" value="Immunoglobulins"/>
    <property type="match status" value="1"/>
</dbReference>
<dbReference type="InterPro" id="IPR003961">
    <property type="entry name" value="FN3_dom"/>
</dbReference>
<dbReference type="InterPro" id="IPR036116">
    <property type="entry name" value="FN3_sf"/>
</dbReference>
<dbReference type="InterPro" id="IPR003531">
    <property type="entry name" value="Hempt_rcpt_S_F1_CS"/>
</dbReference>
<dbReference type="InterPro" id="IPR013783">
    <property type="entry name" value="Ig-like_fold"/>
</dbReference>
<dbReference type="PANTHER" id="PTHR23037">
    <property type="entry name" value="CYTOKINE RECEPTOR"/>
    <property type="match status" value="1"/>
</dbReference>
<dbReference type="PANTHER" id="PTHR23037:SF29">
    <property type="entry name" value="INTERLEUKIN-9 RECEPTOR"/>
    <property type="match status" value="1"/>
</dbReference>
<dbReference type="SUPFAM" id="SSF49265">
    <property type="entry name" value="Fibronectin type III"/>
    <property type="match status" value="1"/>
</dbReference>
<dbReference type="PROSITE" id="PS50853">
    <property type="entry name" value="FN3"/>
    <property type="match status" value="1"/>
</dbReference>
<dbReference type="PROSITE" id="PS01355">
    <property type="entry name" value="HEMATOPO_REC_S_F1"/>
    <property type="match status" value="1"/>
</dbReference>
<reference key="1">
    <citation type="journal article" date="1992" name="Proc. Natl. Acad. Sci. U.S.A.">
        <title>Expression cloning of the murine and human interleukin 9 receptor cDNAs.</title>
        <authorList>
            <person name="Renauld J.-C."/>
            <person name="Druez C."/>
            <person name="Kermouni A."/>
            <person name="Houssiau F."/>
            <person name="Uyttenhove C."/>
            <person name="van Roost E."/>
            <person name="van Snick J."/>
        </authorList>
    </citation>
    <scope>NUCLEOTIDE SEQUENCE [MRNA]</scope>
    <source>
        <tissue>T-cell</tissue>
    </source>
</reference>
<reference key="2">
    <citation type="journal article" date="1990" name="J. Immunol.">
        <title>Functional and biochemical characterization of mouse P40/IL-9 receptors.</title>
        <authorList>
            <person name="Druez C."/>
            <person name="Coulie P."/>
            <person name="Uyttenhove C."/>
            <person name="Van Snick J."/>
        </authorList>
    </citation>
    <scope>FUNCTION</scope>
    <scope>INTERACTION WITH IL9</scope>
</reference>
<sequence>MALGRCIAEGWTLERVAVKQVSWFLIYSWVCSGVCRGVSVPEQGGGGQKAGAFTCLSNSIYRIDCHWSAPELGQESRAWLLFTSNQVTEIKHKCTFWDSMCTLVLPKEEVFLPFDNFTITLHRCIMGQEQVSLVDSQYLPRRHIKLDPPSDLQSNVSSGRCVLTWGINLALEPLITSLSYELAFKRQEEAWEARHKDRIVGVTWLILEAVELNPGSIYEARLRVQMTLESYEDKTEGEYYKSHWSEWSQPVSFPSPQRRQGLLVPRWQWSASILVVVPIFLLLTGFVHLLFKLSPRLKRIFYQNIPSPEAFFHPLYSVYHGDFQSWTGARRAGPQARQNGVSTSSAGSESSIWEAVATLTYSPACPVQFACLKWEATAPGFPGLPGSEHVLPAGCLELEGQPSAYLPQEDWAPLGSARPPPPDSDSGSSDYCMLDCCEECHLSAFPGHTESPELTLAQPVALPVSSRA</sequence>
<evidence type="ECO:0000255" key="1"/>
<evidence type="ECO:0000255" key="2">
    <source>
        <dbReference type="PROSITE-ProRule" id="PRU00316"/>
    </source>
</evidence>
<evidence type="ECO:0000256" key="3">
    <source>
        <dbReference type="SAM" id="MobiDB-lite"/>
    </source>
</evidence>
<evidence type="ECO:0000269" key="4">
    <source>
    </source>
</evidence>
<evidence type="ECO:0000305" key="5"/>
<evidence type="ECO:0007829" key="6">
    <source>
        <dbReference type="PDB" id="8DDD"/>
    </source>
</evidence>
<gene>
    <name type="primary">Il9r</name>
</gene>
<feature type="signal peptide" evidence="1">
    <location>
        <begin position="1"/>
        <end position="37"/>
    </location>
</feature>
<feature type="chain" id="PRO_0000010912" description="Interleukin-9 receptor">
    <location>
        <begin position="38"/>
        <end position="468"/>
    </location>
</feature>
<feature type="topological domain" description="Extracellular" evidence="1">
    <location>
        <begin position="38"/>
        <end position="270"/>
    </location>
</feature>
<feature type="transmembrane region" description="Helical" evidence="1">
    <location>
        <begin position="271"/>
        <end position="291"/>
    </location>
</feature>
<feature type="topological domain" description="Cytoplasmic" evidence="1">
    <location>
        <begin position="292"/>
        <end position="468"/>
    </location>
</feature>
<feature type="domain" description="Fibronectin type-III" evidence="2">
    <location>
        <begin position="148"/>
        <end position="256"/>
    </location>
</feature>
<feature type="region of interest" description="Disordered" evidence="3">
    <location>
        <begin position="407"/>
        <end position="426"/>
    </location>
</feature>
<feature type="short sequence motif" description="WSXWS motif">
    <location>
        <begin position="244"/>
        <end position="248"/>
    </location>
</feature>
<feature type="short sequence motif" description="Box 1 motif">
    <location>
        <begin position="301"/>
        <end position="309"/>
    </location>
</feature>
<feature type="glycosylation site" description="N-linked (GlcNAc...) asparagine" evidence="1">
    <location>
        <position position="116"/>
    </location>
</feature>
<feature type="glycosylation site" description="N-linked (GlcNAc...) asparagine" evidence="1">
    <location>
        <position position="155"/>
    </location>
</feature>
<feature type="helix" evidence="6">
    <location>
        <begin position="271"/>
        <end position="292"/>
    </location>
</feature>
<protein>
    <recommendedName>
        <fullName>Interleukin-9 receptor</fullName>
        <shortName>IL-9 receptor</shortName>
        <shortName>IL-9R</shortName>
    </recommendedName>
    <cdAntigenName>CD129</cdAntigenName>
</protein>
<accession>Q01114</accession>
<proteinExistence type="evidence at protein level"/>
<name>IL9R_MOUSE</name>
<comment type="function">
    <text evidence="4">Plays an important role in the immune response against parasites by acting as a receptor of IL9.</text>
</comment>
<comment type="subunit">
    <text evidence="4">Interacts with IL9.</text>
</comment>
<comment type="subcellular location">
    <subcellularLocation>
        <location>Cell membrane</location>
        <topology>Single-pass type I membrane protein</topology>
    </subcellularLocation>
    <subcellularLocation>
        <location>Secreted</location>
    </subcellularLocation>
</comment>
<comment type="domain">
    <text>The WSXWS motif appears to be necessary for proper protein folding and thereby efficient intracellular transport and cell-surface receptor binding.</text>
</comment>
<comment type="domain">
    <text>The box 1 motif is required for JAK interaction and/or activation.</text>
</comment>
<comment type="similarity">
    <text evidence="5">Belongs to the type I cytokine receptor family. Type 4 subfamily.</text>
</comment>
<organism>
    <name type="scientific">Mus musculus</name>
    <name type="common">Mouse</name>
    <dbReference type="NCBI Taxonomy" id="10090"/>
    <lineage>
        <taxon>Eukaryota</taxon>
        <taxon>Metazoa</taxon>
        <taxon>Chordata</taxon>
        <taxon>Craniata</taxon>
        <taxon>Vertebrata</taxon>
        <taxon>Euteleostomi</taxon>
        <taxon>Mammalia</taxon>
        <taxon>Eutheria</taxon>
        <taxon>Euarchontoglires</taxon>
        <taxon>Glires</taxon>
        <taxon>Rodentia</taxon>
        <taxon>Myomorpha</taxon>
        <taxon>Muroidea</taxon>
        <taxon>Muridae</taxon>
        <taxon>Murinae</taxon>
        <taxon>Mus</taxon>
        <taxon>Mus</taxon>
    </lineage>
</organism>